<organism>
    <name type="scientific">Limosilactobacillus reuteri (strain DSM 20016)</name>
    <name type="common">Lactobacillus reuteri</name>
    <dbReference type="NCBI Taxonomy" id="557436"/>
    <lineage>
        <taxon>Bacteria</taxon>
        <taxon>Bacillati</taxon>
        <taxon>Bacillota</taxon>
        <taxon>Bacilli</taxon>
        <taxon>Lactobacillales</taxon>
        <taxon>Lactobacillaceae</taxon>
        <taxon>Limosilactobacillus</taxon>
    </lineage>
</organism>
<dbReference type="EMBL" id="CP000705">
    <property type="protein sequence ID" value="ABQ83003.1"/>
    <property type="molecule type" value="Genomic_DNA"/>
</dbReference>
<dbReference type="RefSeq" id="WP_003668128.1">
    <property type="nucleotide sequence ID" value="NC_009513.1"/>
</dbReference>
<dbReference type="SMR" id="A5VJH9"/>
<dbReference type="STRING" id="557436.Lreu_0739"/>
<dbReference type="KEGG" id="lre:Lreu_0739"/>
<dbReference type="PATRIC" id="fig|557436.17.peg.1026"/>
<dbReference type="eggNOG" id="COG1381">
    <property type="taxonomic scope" value="Bacteria"/>
</dbReference>
<dbReference type="HOGENOM" id="CLU_066632_4_0_9"/>
<dbReference type="Proteomes" id="UP000001991">
    <property type="component" value="Chromosome"/>
</dbReference>
<dbReference type="GO" id="GO:0043590">
    <property type="term" value="C:bacterial nucleoid"/>
    <property type="evidence" value="ECO:0007669"/>
    <property type="project" value="TreeGrafter"/>
</dbReference>
<dbReference type="GO" id="GO:0006310">
    <property type="term" value="P:DNA recombination"/>
    <property type="evidence" value="ECO:0007669"/>
    <property type="project" value="UniProtKB-UniRule"/>
</dbReference>
<dbReference type="GO" id="GO:0006302">
    <property type="term" value="P:double-strand break repair"/>
    <property type="evidence" value="ECO:0007669"/>
    <property type="project" value="TreeGrafter"/>
</dbReference>
<dbReference type="Gene3D" id="2.40.50.140">
    <property type="entry name" value="Nucleic acid-binding proteins"/>
    <property type="match status" value="1"/>
</dbReference>
<dbReference type="Gene3D" id="1.20.1440.120">
    <property type="entry name" value="Recombination protein O, C-terminal domain"/>
    <property type="match status" value="1"/>
</dbReference>
<dbReference type="HAMAP" id="MF_00201">
    <property type="entry name" value="RecO"/>
    <property type="match status" value="1"/>
</dbReference>
<dbReference type="InterPro" id="IPR037278">
    <property type="entry name" value="ARFGAP/RecO"/>
</dbReference>
<dbReference type="InterPro" id="IPR022572">
    <property type="entry name" value="DNA_rep/recomb_RecO_N"/>
</dbReference>
<dbReference type="InterPro" id="IPR012340">
    <property type="entry name" value="NA-bd_OB-fold"/>
</dbReference>
<dbReference type="InterPro" id="IPR003717">
    <property type="entry name" value="RecO"/>
</dbReference>
<dbReference type="InterPro" id="IPR042242">
    <property type="entry name" value="RecO_C"/>
</dbReference>
<dbReference type="NCBIfam" id="TIGR00613">
    <property type="entry name" value="reco"/>
    <property type="match status" value="1"/>
</dbReference>
<dbReference type="PANTHER" id="PTHR33991">
    <property type="entry name" value="DNA REPAIR PROTEIN RECO"/>
    <property type="match status" value="1"/>
</dbReference>
<dbReference type="PANTHER" id="PTHR33991:SF1">
    <property type="entry name" value="DNA REPAIR PROTEIN RECO"/>
    <property type="match status" value="1"/>
</dbReference>
<dbReference type="Pfam" id="PF02565">
    <property type="entry name" value="RecO_C"/>
    <property type="match status" value="1"/>
</dbReference>
<dbReference type="Pfam" id="PF11967">
    <property type="entry name" value="RecO_N"/>
    <property type="match status" value="1"/>
</dbReference>
<dbReference type="SUPFAM" id="SSF57863">
    <property type="entry name" value="ArfGap/RecO-like zinc finger"/>
    <property type="match status" value="1"/>
</dbReference>
<dbReference type="SUPFAM" id="SSF50249">
    <property type="entry name" value="Nucleic acid-binding proteins"/>
    <property type="match status" value="1"/>
</dbReference>
<proteinExistence type="inferred from homology"/>
<protein>
    <recommendedName>
        <fullName evidence="1">DNA repair protein RecO</fullName>
    </recommendedName>
    <alternativeName>
        <fullName evidence="1">Recombination protein O</fullName>
    </alternativeName>
</protein>
<sequence length="261" mass="29861">MARVTTQFTGIIMYRQDYRERDLLVKMLTDKIGPAMFFVKNAKKRGFRMTADILPFTHGTYIGSLDENGLSFINTASDTSQYKKIASDISKNAYVTYILALVDSAFNDGRSIGGWFKQVAAALDLIEKGLDEQIITNVIETQLLVAFGVAPVWDRCVVCGRNDLALDFSEQYGGMLCQNHWSLDEHRLYLDRKTAYYLQQFATINLQKLNSIRINPATKRRLQQVLDTLYDNEVGLNLKAKRFIKQMNKWEQNIGKLSMND</sequence>
<evidence type="ECO:0000255" key="1">
    <source>
        <dbReference type="HAMAP-Rule" id="MF_00201"/>
    </source>
</evidence>
<gene>
    <name evidence="1" type="primary">recO</name>
    <name type="ordered locus">Lreu_0739</name>
</gene>
<comment type="function">
    <text evidence="1">Involved in DNA repair and RecF pathway recombination.</text>
</comment>
<comment type="similarity">
    <text evidence="1">Belongs to the RecO family.</text>
</comment>
<feature type="chain" id="PRO_1000058567" description="DNA repair protein RecO">
    <location>
        <begin position="1"/>
        <end position="261"/>
    </location>
</feature>
<reference key="1">
    <citation type="journal article" date="2011" name="PLoS Genet.">
        <title>The evolution of host specialization in the vertebrate gut symbiont Lactobacillus reuteri.</title>
        <authorList>
            <person name="Frese S.A."/>
            <person name="Benson A.K."/>
            <person name="Tannock G.W."/>
            <person name="Loach D.M."/>
            <person name="Kim J."/>
            <person name="Zhang M."/>
            <person name="Oh P.L."/>
            <person name="Heng N.C."/>
            <person name="Patil P.B."/>
            <person name="Juge N."/>
            <person name="Mackenzie D.A."/>
            <person name="Pearson B.M."/>
            <person name="Lapidus A."/>
            <person name="Dalin E."/>
            <person name="Tice H."/>
            <person name="Goltsman E."/>
            <person name="Land M."/>
            <person name="Hauser L."/>
            <person name="Ivanova N."/>
            <person name="Kyrpides N.C."/>
            <person name="Walter J."/>
        </authorList>
    </citation>
    <scope>NUCLEOTIDE SEQUENCE [LARGE SCALE GENOMIC DNA]</scope>
    <source>
        <strain>DSM 20016</strain>
    </source>
</reference>
<accession>A5VJH9</accession>
<name>RECO_LIMRD</name>
<keyword id="KW-0227">DNA damage</keyword>
<keyword id="KW-0233">DNA recombination</keyword>
<keyword id="KW-0234">DNA repair</keyword>
<keyword id="KW-1185">Reference proteome</keyword>